<organism>
    <name type="scientific">Pleurotus ostreatus (strain PC15)</name>
    <name type="common">Oyster mushroom</name>
    <dbReference type="NCBI Taxonomy" id="1137138"/>
    <lineage>
        <taxon>Eukaryota</taxon>
        <taxon>Fungi</taxon>
        <taxon>Dikarya</taxon>
        <taxon>Basidiomycota</taxon>
        <taxon>Agaricomycotina</taxon>
        <taxon>Agaricomycetes</taxon>
        <taxon>Agaricomycetidae</taxon>
        <taxon>Agaricales</taxon>
        <taxon>Pleurotineae</taxon>
        <taxon>Pleurotaceae</taxon>
        <taxon>Pleurotus</taxon>
    </lineage>
</organism>
<evidence type="ECO:0000250" key="1">
    <source>
        <dbReference type="UniProtKB" id="Q04571"/>
    </source>
</evidence>
<evidence type="ECO:0000255" key="2"/>
<evidence type="ECO:0000255" key="3">
    <source>
        <dbReference type="PROSITE-ProRule" id="PRU00498"/>
    </source>
</evidence>
<evidence type="ECO:0000269" key="4">
    <source>
    </source>
</evidence>
<evidence type="ECO:0000269" key="5">
    <source>
    </source>
</evidence>
<evidence type="ECO:0000269" key="6">
    <source>
    </source>
</evidence>
<evidence type="ECO:0000269" key="7">
    <source>
    </source>
</evidence>
<evidence type="ECO:0000269" key="8">
    <source>
    </source>
</evidence>
<evidence type="ECO:0000303" key="9">
    <source>
    </source>
</evidence>
<evidence type="ECO:0000305" key="10"/>
<reference key="1">
    <citation type="journal article" date="2014" name="Proc. Natl. Acad. Sci. U.S.A.">
        <title>Extensive sampling of basidiomycete genomes demonstrates inadequacy of the white-rot/brown-rot paradigm for wood decay fungi.</title>
        <authorList>
            <person name="Riley R."/>
            <person name="Salamov A.A."/>
            <person name="Brown D.W."/>
            <person name="Nagy L.G."/>
            <person name="Floudas D."/>
            <person name="Held B.W."/>
            <person name="Levasseur A."/>
            <person name="Lombard V."/>
            <person name="Morin E."/>
            <person name="Otillar R."/>
            <person name="Lindquist E.A."/>
            <person name="Sun H."/>
            <person name="LaButti K.M."/>
            <person name="Schmutz J."/>
            <person name="Jabbour D."/>
            <person name="Luo H."/>
            <person name="Baker S.E."/>
            <person name="Pisabarro A.G."/>
            <person name="Walton J.D."/>
            <person name="Blanchette R.A."/>
            <person name="Henrissat B."/>
            <person name="Martin F."/>
            <person name="Cullen D."/>
            <person name="Hibbett D.S."/>
            <person name="Grigoriev I.V."/>
        </authorList>
    </citation>
    <scope>NUCLEOTIDE SEQUENCE [LARGE SCALE GENOMIC DNA]</scope>
    <source>
        <strain>PC15</strain>
    </source>
</reference>
<reference key="2">
    <citation type="journal article" date="2002" name="Appl. Environ. Microbiol.">
        <title>Differentially regulated, vegetative-mycelium-specific hydrophobins of the edible basidiomycete Pleurotus ostreatus.</title>
        <authorList>
            <person name="Penas M.M."/>
            <person name="Rust B."/>
            <person name="Larraya L.M."/>
            <person name="Ramirez L."/>
            <person name="Pisabarro A.G."/>
        </authorList>
    </citation>
    <scope>DEVELOPMENTAL STAGE</scope>
    <scope>INDUCTION</scope>
    <scope>FUNCTION</scope>
    <scope>SUBCELLULAR LOCATION</scope>
</reference>
<reference key="3">
    <citation type="journal article" date="2021" name="Microbiol. Res.">
        <title>Identification of hydrophobin genes and their physiological functions related to growth and development in Pleurotus ostreatus.</title>
        <authorList>
            <person name="Xu D."/>
            <person name="Wang Y."/>
            <person name="Keerio A.A."/>
            <person name="Ma A."/>
        </authorList>
    </citation>
    <scope>DEVELOPMENTAL STAGE</scope>
</reference>
<reference key="4">
    <citation type="journal article" date="2022" name="Protein Expr. Purif.">
        <title>Identification and characterization of a hydrophobin Vmh3 from Pleurotus ostreatus.</title>
        <authorList>
            <person name="Kulkarni S.S."/>
            <person name="Nene S.N."/>
            <person name="Joshi K.S."/>
        </authorList>
    </citation>
    <scope>SUBUNIT</scope>
    <scope>BIOTECHNOLOGY</scope>
</reference>
<reference key="5">
    <citation type="journal article" date="2023" name="Lett. Appl. Microbiol.">
        <title>Physiological function of hydrophobin Vmh3 in lignin degradation by white-rot fungus Pleurotus ostreatus.</title>
        <authorList>
            <person name="Han J."/>
            <person name="Kawauchi M."/>
            <person name="Terauchi Y."/>
            <person name="Yoshimi A."/>
            <person name="Tanaka C."/>
            <person name="Nakazawa T."/>
            <person name="Honda Y."/>
        </authorList>
    </citation>
    <scope>FUNCTION</scope>
    <scope>DISRUPTION PHENOTYPE</scope>
</reference>
<reference key="6">
    <citation type="journal article" date="2023" name="FEMS Microbiol. Lett.">
        <title>Features of disruption mutants of genes encoding for hydrophobin Vmh2 and Vmh3 in mycelial formation and resistance to environmental stress in Pleurotus ostreatus.</title>
        <authorList>
            <person name="Han J."/>
            <person name="Kawauchi M."/>
            <person name="Schiphof K."/>
            <person name="Terauchi Y."/>
            <person name="Yoshimi A."/>
            <person name="Tanaka C."/>
            <person name="Nakazawa T."/>
            <person name="Honda Y."/>
        </authorList>
    </citation>
    <scope>FUNCTION</scope>
    <scope>DISRUPTION PHENOTYPE</scope>
</reference>
<dbReference type="EMBL" id="KL198013">
    <property type="protein sequence ID" value="KDQ23304.1"/>
    <property type="molecule type" value="Genomic_DNA"/>
</dbReference>
<dbReference type="SMR" id="A0A067N648"/>
<dbReference type="STRING" id="1137138.A0A067N648"/>
<dbReference type="VEuPathDB" id="FungiDB:PLEOSDRAFT_1114379"/>
<dbReference type="HOGENOM" id="CLU_105134_3_1_1"/>
<dbReference type="InParanoid" id="A0A067N648"/>
<dbReference type="OrthoDB" id="150532at5338"/>
<dbReference type="Proteomes" id="UP000027073">
    <property type="component" value="Unassembled WGS sequence"/>
</dbReference>
<dbReference type="GO" id="GO:0005576">
    <property type="term" value="C:extracellular region"/>
    <property type="evidence" value="ECO:0007669"/>
    <property type="project" value="UniProtKB-KW"/>
</dbReference>
<dbReference type="GO" id="GO:0009277">
    <property type="term" value="C:fungal-type cell wall"/>
    <property type="evidence" value="ECO:0007669"/>
    <property type="project" value="InterPro"/>
</dbReference>
<dbReference type="GO" id="GO:0005199">
    <property type="term" value="F:structural constituent of cell wall"/>
    <property type="evidence" value="ECO:0007669"/>
    <property type="project" value="InterPro"/>
</dbReference>
<dbReference type="CDD" id="cd23507">
    <property type="entry name" value="hydrophobin_I"/>
    <property type="match status" value="1"/>
</dbReference>
<dbReference type="InterPro" id="IPR001338">
    <property type="entry name" value="Hydrophobin"/>
</dbReference>
<dbReference type="InterPro" id="IPR019778">
    <property type="entry name" value="Hydrophobin_CS"/>
</dbReference>
<dbReference type="Pfam" id="PF01185">
    <property type="entry name" value="Hydrophobin"/>
    <property type="match status" value="1"/>
</dbReference>
<dbReference type="SMART" id="SM00075">
    <property type="entry name" value="HYDRO"/>
    <property type="match status" value="1"/>
</dbReference>
<dbReference type="PROSITE" id="PS00956">
    <property type="entry name" value="HYDROPHOBIN"/>
    <property type="match status" value="1"/>
</dbReference>
<feature type="signal peptide" evidence="2">
    <location>
        <begin position="1"/>
        <end position="17"/>
    </location>
</feature>
<feature type="chain" id="PRO_5013984659" description="Class I hydrophobin 3">
    <location>
        <begin position="18"/>
        <end position="108"/>
    </location>
</feature>
<feature type="glycosylation site" description="N-linked (GlcNAc...) asparagine" evidence="3">
    <location>
        <position position="37"/>
    </location>
</feature>
<feature type="disulfide bond" evidence="1">
    <location>
        <begin position="28"/>
        <end position="87"/>
    </location>
</feature>
<feature type="disulfide bond" evidence="1">
    <location>
        <begin position="35"/>
        <end position="81"/>
    </location>
</feature>
<feature type="disulfide bond" evidence="1">
    <location>
        <begin position="36"/>
        <end position="69"/>
    </location>
</feature>
<feature type="disulfide bond" evidence="1">
    <location>
        <begin position="88"/>
        <end position="101"/>
    </location>
</feature>
<gene>
    <name evidence="9" type="primary">vmh3</name>
    <name type="ORF">PLEOSDRAFT_1114379</name>
</gene>
<comment type="function">
    <text evidence="4 7 8 10">Aerial growth, conidiation, and dispersal of filamentous fungi in the environment rely upon a capability of their secreting small amphipathic proteins called hydrophobins (HPBs) with low sequence identity. Class I can self-assemble into an outermost layer of rodlet bundles on aerial cell surfaces, conferring cellular hydrophobicity that supports fungal growth, development and dispersal; whereas Class II form highly ordered films at water-air interfaces through intermolecular interactions but contribute nothing to the rodlet structure (Probable). Vmh3 is a class I hydrophobin that is essential for the maintenance of the surface hydrophobicity of the mycelium and might be involved in the development of fruiting bodies (PubMed:12147487, PubMed:37081785). Plays an important role in hyphal resistance against environmental stress (PubMed:37081785). Necessary for the efficient biodegradation of lignin (PubMed:37061783).</text>
</comment>
<comment type="subunit">
    <text evidence="6">Self-assembles to form functional amyloid fibrils called rodlets. Self-assembly into fibrillar rodlets occurs spontaneously at hydrophobic:hydrophilic interfaces and the rodlets further associate laterally to form amphipathic monolayers.</text>
</comment>
<comment type="subcellular location">
    <subcellularLocation>
        <location evidence="6">Secreted</location>
    </subcellularLocation>
    <subcellularLocation>
        <location evidence="6">Secreted</location>
        <location evidence="6">Cell wall</location>
    </subcellularLocation>
</comment>
<comment type="developmental stage">
    <text evidence="4 5">Highly expressed in both in monokaryotic and dikaryotic mycelia (PubMed:33636611). Expressed at the vegetative stage as well as in the fruiting bodies (PubMed:12147487).</text>
</comment>
<comment type="induction">
    <text evidence="4">Expressed throughout the culture in cell wall extracts, but increased when the aerial development becomes prominent (PubMed:12147487). Expression is impaired by carbon source limitation (PubMed:12147487).</text>
</comment>
<comment type="disruption phenotype">
    <text evidence="7 8">Alters the cell surface structure and mycelial hydrophobicity (PubMed:37061783, PubMed:37081785). Exhibits relatively slower aerial mycelia formation on a liquid medium and leads to slower growth under stress conditions involving SDS and H(2)O(2) (PubMed:37081785). Leads to a marked delay in lignin degradation on beech wood sawdust medium, while the production of lignin-modifying enzymes is not reduced (PubMed:37061783).</text>
</comment>
<comment type="biotechnology">
    <text evidence="6">Vmh3 can be efficiently used in surface modification applications such as antifouling agents, in modifications of biomaterials used as implants, in designing drug delivery systems for water-insoluble drugs, and also in food foams.</text>
</comment>
<comment type="similarity">
    <text evidence="10">Belongs to the fungal hydrophobin family.</text>
</comment>
<sequence>MFFQTTIVAALASLAVATPLALRTDSRCNTESVKCCNKSEDAETFKKSASAALIPIKIGDITGEVYSECSPIVGLIGGSSCSAQTVCCDNAKFNGLVNIGCTPINVAL</sequence>
<name>VMH3_PLEO1</name>
<accession>A0A067N648</accession>
<proteinExistence type="evidence at protein level"/>
<keyword id="KW-0134">Cell wall</keyword>
<keyword id="KW-1015">Disulfide bond</keyword>
<keyword id="KW-0325">Glycoprotein</keyword>
<keyword id="KW-1185">Reference proteome</keyword>
<keyword id="KW-0964">Secreted</keyword>
<keyword id="KW-0732">Signal</keyword>
<protein>
    <recommendedName>
        <fullName evidence="9">Class I hydrophobin 3</fullName>
    </recommendedName>
</protein>